<organism>
    <name type="scientific">Staphylococcus aureus (strain USA300)</name>
    <dbReference type="NCBI Taxonomy" id="367830"/>
    <lineage>
        <taxon>Bacteria</taxon>
        <taxon>Bacillati</taxon>
        <taxon>Bacillota</taxon>
        <taxon>Bacilli</taxon>
        <taxon>Bacillales</taxon>
        <taxon>Staphylococcaceae</taxon>
        <taxon>Staphylococcus</taxon>
    </lineage>
</organism>
<dbReference type="EMBL" id="CP000255">
    <property type="protein sequence ID" value="ABD22304.1"/>
    <property type="molecule type" value="Genomic_DNA"/>
</dbReference>
<dbReference type="SMR" id="A0A0H2XI17"/>
<dbReference type="KEGG" id="saa:SAUSA300_0875"/>
<dbReference type="HOGENOM" id="CLU_091588_2_2_9"/>
<dbReference type="Proteomes" id="UP000001939">
    <property type="component" value="Chromosome"/>
</dbReference>
<dbReference type="Gene3D" id="3.30.300.130">
    <property type="entry name" value="Fe-S cluster assembly (FSCA)"/>
    <property type="match status" value="1"/>
</dbReference>
<dbReference type="InterPro" id="IPR052339">
    <property type="entry name" value="Fe-S_Maturation_MIP18"/>
</dbReference>
<dbReference type="InterPro" id="IPR034904">
    <property type="entry name" value="FSCA_dom_sf"/>
</dbReference>
<dbReference type="InterPro" id="IPR002744">
    <property type="entry name" value="MIP18-like"/>
</dbReference>
<dbReference type="PANTHER" id="PTHR42831">
    <property type="entry name" value="FE-S PROTEIN MATURATION AUXILIARY FACTOR YITW"/>
    <property type="match status" value="1"/>
</dbReference>
<dbReference type="PANTHER" id="PTHR42831:SF1">
    <property type="entry name" value="FE-S PROTEIN MATURATION AUXILIARY FACTOR YITW"/>
    <property type="match status" value="1"/>
</dbReference>
<dbReference type="Pfam" id="PF01883">
    <property type="entry name" value="FeS_assembly_P"/>
    <property type="match status" value="1"/>
</dbReference>
<dbReference type="SUPFAM" id="SSF117916">
    <property type="entry name" value="Fe-S cluster assembly (FSCA) domain-like"/>
    <property type="match status" value="1"/>
</dbReference>
<proteinExistence type="evidence at transcript level"/>
<accession>A0A0H2XI17</accession>
<evidence type="ECO:0000269" key="1">
    <source>
    </source>
</evidence>
<evidence type="ECO:0000269" key="2">
    <source>
    </source>
</evidence>
<evidence type="ECO:0000303" key="3">
    <source>
    </source>
</evidence>
<evidence type="ECO:0000303" key="4">
    <source>
    </source>
</evidence>
<evidence type="ECO:0000305" key="5"/>
<evidence type="ECO:0000312" key="6">
    <source>
        <dbReference type="EMBL" id="ABD22304.1"/>
    </source>
</evidence>
<comment type="function">
    <text evidence="1 2">Involved in the maturation of iron-sulfur (Fe-S) proteins (PubMed:27517714, PubMed:27671355). May function as a Fe-S cluster carrier (PubMed:27671355). Is required for S.aureus growth under conditions that impose a high demand for lipoic acid, likely via a role in the maturation of the lipoate synthase LipA (PubMed:27671355). Is non-essential for growth in conditions that impose a low demand for lipoic acid or Fe-S clusters, such as fermentative growth (PubMed:27517714, PubMed:27671355). Also seems to be involved in the maturation of AcnA, LeuCD and IlvD proteins, that utilize Fe-S cluster cofactors, and its role increases under conditions of high-demand for Fe-S clusters (respiratory growth) (PubMed:27517714). Is not involved in the repair of Fe-S clusters damaged by reactive oxygen species or in the physical protection of Fe-S clusters from oxidants (PubMed:27517714). Displays synergy with the Fe-S cluster carrier Nfu (PubMed:27517714).</text>
</comment>
<comment type="induction">
    <text evidence="1 2">Transcription of sufT decreases when aerobically cultured cells are shifted to an anaerobic (fermentative) environment, and increases upon reaeration (PubMed:27517714). Up-regulated upon culture in serine dropout medium relative to liquid 20 AA medium (PubMed:27671355).</text>
</comment>
<comment type="disruption phenotype">
    <text evidence="1 2">Cells lacking this gene have decreased activities of the Fe-S cluster-dependent enzymes AcnA, LeuCD and IlvD, meaning a defect in the assembly of Fe-S proteins (PubMed:27517714). They are capable of growth in liquid chemically defined medium containing the 20 canonical amino acids (AA) and glucose as a carbon source, but display growth defects in defined medium lacking leucine and isoleucine (PubMed:27517714). In contrast, the deletion mutant strain is unable to grow upon the same 20 AA medium in solid form; supplementation of the solid 20 AA medium with lipoic acid fully corrects the growth of the mutant strain, and returning the sufT gene in trans also corrects growth in the absence of lipoic acid (PubMed:27671355). Further experimentation found that S.aureus growth upon solid chemically defined media was highly reliant upon the lipoamide-requiring enzymes pyruvate dehydrogenase (Pdh) and branched chain keto-acid dehydrogenase (Bck); the reliance upon Pdh and Bck for growth was decreased upon culture in liquid defined media (PubMed:27671355). A strain lacking SufT displays phenotypes consistent with decreased activities of multiple lipoamide-dependent enzymes (LipA, Pdh, Bck and Gcv) (PubMed:27671355).</text>
</comment>
<comment type="similarity">
    <text evidence="5">Belongs to the MIP18 family.</text>
</comment>
<gene>
    <name evidence="3 4" type="primary">sufT</name>
    <name evidence="6" type="ordered locus">SAUSA300_0875</name>
</gene>
<feature type="chain" id="PRO_0000439588" description="Fe-S protein maturation auxiliary factor SufT">
    <location>
        <begin position="1"/>
        <end position="88"/>
    </location>
</feature>
<name>SUFT_STAA3</name>
<sequence length="88" mass="9652">MVIDPELGIDIVNLGLVYKVNVDDEGVCTVDMTLTSMGCPMGPQIIDQVKTVLAEIPEIQDTEVNIVWSPPWTKDMMSRYAKIALGVS</sequence>
<reference key="1">
    <citation type="journal article" date="2006" name="Lancet">
        <title>Complete genome sequence of USA300, an epidemic clone of community-acquired meticillin-resistant Staphylococcus aureus.</title>
        <authorList>
            <person name="Diep B.A."/>
            <person name="Gill S.R."/>
            <person name="Chang R.F."/>
            <person name="Phan T.H."/>
            <person name="Chen J.H."/>
            <person name="Davidson M.G."/>
            <person name="Lin F."/>
            <person name="Lin J."/>
            <person name="Carleton H.A."/>
            <person name="Mongodin E.F."/>
            <person name="Sensabaugh G.F."/>
            <person name="Perdreau-Remington F."/>
        </authorList>
    </citation>
    <scope>NUCLEOTIDE SEQUENCE [LARGE SCALE GENOMIC DNA]</scope>
    <source>
        <strain>USA300</strain>
    </source>
</reference>
<reference key="2">
    <citation type="journal article" date="2016" name="Mol. Microbiol.">
        <title>Staphylococcus aureus SufT: an essential iron-sulphur cluster assembly factor in cells experiencing a high-demand for lipoic acid.</title>
        <authorList>
            <person name="Mashruwala A.A."/>
            <person name="Roberts C.A."/>
            <person name="Bhatt S."/>
            <person name="May K.L."/>
            <person name="Carroll R.K."/>
            <person name="Shaw L.N."/>
            <person name="Boyd J.M."/>
        </authorList>
    </citation>
    <scope>FUNCTION</scope>
    <scope>DISRUPTION PHENOTYPE</scope>
    <scope>INDUCTION</scope>
    <source>
        <strain>USA300</strain>
    </source>
</reference>
<reference key="3">
    <citation type="journal article" date="2016" name="PLoS Genet.">
        <title>The DUF59 containing protein SufT is involved in the maturation of iron-sulfur (FeS) proteins during conditions of high FeS cofactor demand in Staphylococcus aureus.</title>
        <authorList>
            <person name="Mashruwala A.A."/>
            <person name="Bhatt S."/>
            <person name="Poudel S."/>
            <person name="Boyd E.S."/>
            <person name="Boyd J.M."/>
        </authorList>
    </citation>
    <scope>FUNCTION</scope>
    <scope>DISRUPTION PHENOTYPE</scope>
    <scope>INDUCTION</scope>
    <source>
        <strain>USA300</strain>
    </source>
</reference>
<protein>
    <recommendedName>
        <fullName evidence="3">Fe-S protein maturation auxiliary factor SufT</fullName>
    </recommendedName>
    <alternativeName>
        <fullName evidence="3">Fe-S protein maturation accessory factor SufT</fullName>
    </alternativeName>
    <alternativeName>
        <fullName evidence="4">Iron-sulfur cluster assembly factor SufT</fullName>
    </alternativeName>
</protein>